<keyword id="KW-0378">Hydrolase</keyword>
<keyword id="KW-0479">Metal-binding</keyword>
<keyword id="KW-0482">Metalloprotease</keyword>
<keyword id="KW-0645">Protease</keyword>
<keyword id="KW-0862">Zinc</keyword>
<accession>Q7W9B6</accession>
<gene>
    <name type="ordered locus">BPP1850</name>
</gene>
<name>Y1850_BORPA</name>
<organism>
    <name type="scientific">Bordetella parapertussis (strain 12822 / ATCC BAA-587 / NCTC 13253)</name>
    <dbReference type="NCBI Taxonomy" id="257311"/>
    <lineage>
        <taxon>Bacteria</taxon>
        <taxon>Pseudomonadati</taxon>
        <taxon>Pseudomonadota</taxon>
        <taxon>Betaproteobacteria</taxon>
        <taxon>Burkholderiales</taxon>
        <taxon>Alcaligenaceae</taxon>
        <taxon>Bordetella</taxon>
    </lineage>
</organism>
<proteinExistence type="inferred from homology"/>
<reference key="1">
    <citation type="journal article" date="2003" name="Nat. Genet.">
        <title>Comparative analysis of the genome sequences of Bordetella pertussis, Bordetella parapertussis and Bordetella bronchiseptica.</title>
        <authorList>
            <person name="Parkhill J."/>
            <person name="Sebaihia M."/>
            <person name="Preston A."/>
            <person name="Murphy L.D."/>
            <person name="Thomson N.R."/>
            <person name="Harris D.E."/>
            <person name="Holden M.T.G."/>
            <person name="Churcher C.M."/>
            <person name="Bentley S.D."/>
            <person name="Mungall K.L."/>
            <person name="Cerdeno-Tarraga A.-M."/>
            <person name="Temple L."/>
            <person name="James K.D."/>
            <person name="Harris B."/>
            <person name="Quail M.A."/>
            <person name="Achtman M."/>
            <person name="Atkin R."/>
            <person name="Baker S."/>
            <person name="Basham D."/>
            <person name="Bason N."/>
            <person name="Cherevach I."/>
            <person name="Chillingworth T."/>
            <person name="Collins M."/>
            <person name="Cronin A."/>
            <person name="Davis P."/>
            <person name="Doggett J."/>
            <person name="Feltwell T."/>
            <person name="Goble A."/>
            <person name="Hamlin N."/>
            <person name="Hauser H."/>
            <person name="Holroyd S."/>
            <person name="Jagels K."/>
            <person name="Leather S."/>
            <person name="Moule S."/>
            <person name="Norberczak H."/>
            <person name="O'Neil S."/>
            <person name="Ormond D."/>
            <person name="Price C."/>
            <person name="Rabbinowitsch E."/>
            <person name="Rutter S."/>
            <person name="Sanders M."/>
            <person name="Saunders D."/>
            <person name="Seeger K."/>
            <person name="Sharp S."/>
            <person name="Simmonds M."/>
            <person name="Skelton J."/>
            <person name="Squares R."/>
            <person name="Squares S."/>
            <person name="Stevens K."/>
            <person name="Unwin L."/>
            <person name="Whitehead S."/>
            <person name="Barrell B.G."/>
            <person name="Maskell D.J."/>
        </authorList>
    </citation>
    <scope>NUCLEOTIDE SEQUENCE [LARGE SCALE GENOMIC DNA]</scope>
    <source>
        <strain>12822 / ATCC BAA-587 / NCTC 13253</strain>
    </source>
</reference>
<protein>
    <recommendedName>
        <fullName>UPF0758 protein BPP1850</fullName>
    </recommendedName>
</protein>
<feature type="chain" id="PRO_0000190685" description="UPF0758 protein BPP1850">
    <location>
        <begin position="1"/>
        <end position="225"/>
    </location>
</feature>
<feature type="domain" description="MPN" evidence="1">
    <location>
        <begin position="103"/>
        <end position="225"/>
    </location>
</feature>
<feature type="short sequence motif" description="JAMM motif" evidence="1">
    <location>
        <begin position="174"/>
        <end position="187"/>
    </location>
</feature>
<feature type="binding site" evidence="1">
    <location>
        <position position="174"/>
    </location>
    <ligand>
        <name>Zn(2+)</name>
        <dbReference type="ChEBI" id="CHEBI:29105"/>
        <note>catalytic</note>
    </ligand>
</feature>
<feature type="binding site" evidence="1">
    <location>
        <position position="176"/>
    </location>
    <ligand>
        <name>Zn(2+)</name>
        <dbReference type="ChEBI" id="CHEBI:29105"/>
        <note>catalytic</note>
    </ligand>
</feature>
<feature type="binding site" evidence="1">
    <location>
        <position position="187"/>
    </location>
    <ligand>
        <name>Zn(2+)</name>
        <dbReference type="ChEBI" id="CHEBI:29105"/>
        <note>catalytic</note>
    </ligand>
</feature>
<sequence>MSLPEPLLRAGWPRERLLRHGAATLSDPELLALALRTGVAGCNAVQLGHDLLRRFGGLRGLLGTSPAELQVVPGLGTAKACVLAAVLELARRTLEEDLVRQDALANPDLVRRYCQAALGHRKVEHCIALYLDARLKLIICAEVARGTLTQAQIYPREIVREALRHHAAALILAHNHPGGTAAASAADIAMTRQIRQALALVDVRLIDHVIVAGAATVSMAAQGHL</sequence>
<evidence type="ECO:0000255" key="1">
    <source>
        <dbReference type="PROSITE-ProRule" id="PRU01182"/>
    </source>
</evidence>
<evidence type="ECO:0000305" key="2"/>
<dbReference type="EMBL" id="BX640428">
    <property type="protein sequence ID" value="CAE37151.1"/>
    <property type="molecule type" value="Genomic_DNA"/>
</dbReference>
<dbReference type="RefSeq" id="WP_010928237.1">
    <property type="nucleotide sequence ID" value="NC_002928.3"/>
</dbReference>
<dbReference type="SMR" id="Q7W9B6"/>
<dbReference type="GeneID" id="93203616"/>
<dbReference type="KEGG" id="bpa:BPP1850"/>
<dbReference type="HOGENOM" id="CLU_073529_0_1_4"/>
<dbReference type="Proteomes" id="UP000001421">
    <property type="component" value="Chromosome"/>
</dbReference>
<dbReference type="GO" id="GO:0046872">
    <property type="term" value="F:metal ion binding"/>
    <property type="evidence" value="ECO:0007669"/>
    <property type="project" value="UniProtKB-KW"/>
</dbReference>
<dbReference type="GO" id="GO:0008237">
    <property type="term" value="F:metallopeptidase activity"/>
    <property type="evidence" value="ECO:0007669"/>
    <property type="project" value="UniProtKB-KW"/>
</dbReference>
<dbReference type="GO" id="GO:0006508">
    <property type="term" value="P:proteolysis"/>
    <property type="evidence" value="ECO:0007669"/>
    <property type="project" value="UniProtKB-KW"/>
</dbReference>
<dbReference type="CDD" id="cd08071">
    <property type="entry name" value="MPN_DUF2466"/>
    <property type="match status" value="1"/>
</dbReference>
<dbReference type="Gene3D" id="3.40.140.10">
    <property type="entry name" value="Cytidine Deaminase, domain 2"/>
    <property type="match status" value="1"/>
</dbReference>
<dbReference type="InterPro" id="IPR037518">
    <property type="entry name" value="MPN"/>
</dbReference>
<dbReference type="InterPro" id="IPR025657">
    <property type="entry name" value="RadC_JAB"/>
</dbReference>
<dbReference type="InterPro" id="IPR010994">
    <property type="entry name" value="RuvA_2-like"/>
</dbReference>
<dbReference type="InterPro" id="IPR001405">
    <property type="entry name" value="UPF0758"/>
</dbReference>
<dbReference type="InterPro" id="IPR046778">
    <property type="entry name" value="UPF0758_N"/>
</dbReference>
<dbReference type="NCBIfam" id="NF000642">
    <property type="entry name" value="PRK00024.1"/>
    <property type="match status" value="1"/>
</dbReference>
<dbReference type="NCBIfam" id="TIGR00608">
    <property type="entry name" value="radc"/>
    <property type="match status" value="1"/>
</dbReference>
<dbReference type="PANTHER" id="PTHR30471">
    <property type="entry name" value="DNA REPAIR PROTEIN RADC"/>
    <property type="match status" value="1"/>
</dbReference>
<dbReference type="PANTHER" id="PTHR30471:SF3">
    <property type="entry name" value="UPF0758 PROTEIN YEES-RELATED"/>
    <property type="match status" value="1"/>
</dbReference>
<dbReference type="Pfam" id="PF04002">
    <property type="entry name" value="RadC"/>
    <property type="match status" value="1"/>
</dbReference>
<dbReference type="Pfam" id="PF20582">
    <property type="entry name" value="UPF0758_N"/>
    <property type="match status" value="1"/>
</dbReference>
<dbReference type="SUPFAM" id="SSF47781">
    <property type="entry name" value="RuvA domain 2-like"/>
    <property type="match status" value="1"/>
</dbReference>
<dbReference type="PROSITE" id="PS50249">
    <property type="entry name" value="MPN"/>
    <property type="match status" value="1"/>
</dbReference>
<comment type="similarity">
    <text evidence="2">Belongs to the UPF0758 family.</text>
</comment>